<organism>
    <name type="scientific">Deinococcus deserti (strain DSM 17065 / CIP 109153 / LMG 22923 / VCD115)</name>
    <dbReference type="NCBI Taxonomy" id="546414"/>
    <lineage>
        <taxon>Bacteria</taxon>
        <taxon>Thermotogati</taxon>
        <taxon>Deinococcota</taxon>
        <taxon>Deinococci</taxon>
        <taxon>Deinococcales</taxon>
        <taxon>Deinococcaceae</taxon>
        <taxon>Deinococcus</taxon>
    </lineage>
</organism>
<protein>
    <recommendedName>
        <fullName evidence="1">S-adenosylmethionine synthase</fullName>
        <shortName evidence="1">AdoMet synthase</shortName>
        <ecNumber evidence="1">2.5.1.6</ecNumber>
    </recommendedName>
    <alternativeName>
        <fullName evidence="1">MAT</fullName>
    </alternativeName>
    <alternativeName>
        <fullName evidence="1">Methionine adenosyltransferase</fullName>
    </alternativeName>
</protein>
<sequence>MRKFYTSESVSEGHPDKLADFISDSILDEFLRQEPTSRVAVETLVTTGMAVVAGEVRAITAHVDVQKTVRDAVMKVGYTRANYGFDAEYSAVLVSIHEQSPEIAEGVDHSEEWRGMSEAERALPENAYSLVGAGDQGLMFGYATDETPELMPLPISLAHQLTRRLAELRKNGTLPYLRPDAKAQVTVVRDGDVHDASETLVDTIVISTQHGEDVTQEQIRQDMLKHVIQAVIPAEYLTPDTKYFINPSGRFVIGGPHGDTGLTGRKIIVDTYGGAVPHGGGAFSGKDPTKVDRSAAYYARYIAKNIVAAGLARRALVEVAYAIGRAHPVSLRVDTYGTGTVSDERLAQLVEAHFDARPQAIIAQLDLQRPIYAQTAAYGHFGRPEFPWEQTDRAEALRQAAQG</sequence>
<accession>C1CY25</accession>
<reference key="1">
    <citation type="journal article" date="2009" name="PLoS Genet.">
        <title>Alliance of proteomics and genomics to unravel the specificities of Sahara bacterium Deinococcus deserti.</title>
        <authorList>
            <person name="de Groot A."/>
            <person name="Dulermo R."/>
            <person name="Ortet P."/>
            <person name="Blanchard L."/>
            <person name="Guerin P."/>
            <person name="Fernandez B."/>
            <person name="Vacherie B."/>
            <person name="Dossat C."/>
            <person name="Jolivet E."/>
            <person name="Siguier P."/>
            <person name="Chandler M."/>
            <person name="Barakat M."/>
            <person name="Dedieu A."/>
            <person name="Barbe V."/>
            <person name="Heulin T."/>
            <person name="Sommer S."/>
            <person name="Achouak W."/>
            <person name="Armengaud J."/>
        </authorList>
    </citation>
    <scope>NUCLEOTIDE SEQUENCE [LARGE SCALE GENOMIC DNA]</scope>
    <source>
        <strain>DSM 17065 / CIP 109153 / LMG 22923 / VCD115</strain>
    </source>
</reference>
<keyword id="KW-0067">ATP-binding</keyword>
<keyword id="KW-0963">Cytoplasm</keyword>
<keyword id="KW-0460">Magnesium</keyword>
<keyword id="KW-0479">Metal-binding</keyword>
<keyword id="KW-0547">Nucleotide-binding</keyword>
<keyword id="KW-0554">One-carbon metabolism</keyword>
<keyword id="KW-0630">Potassium</keyword>
<keyword id="KW-1185">Reference proteome</keyword>
<keyword id="KW-0808">Transferase</keyword>
<dbReference type="EC" id="2.5.1.6" evidence="1"/>
<dbReference type="EMBL" id="CP001114">
    <property type="protein sequence ID" value="ACO46981.1"/>
    <property type="molecule type" value="Genomic_DNA"/>
</dbReference>
<dbReference type="RefSeq" id="WP_012694102.1">
    <property type="nucleotide sequence ID" value="NC_012526.1"/>
</dbReference>
<dbReference type="SMR" id="C1CY25"/>
<dbReference type="STRING" id="546414.Deide_19790"/>
<dbReference type="PaxDb" id="546414-Deide_19790"/>
<dbReference type="KEGG" id="ddr:Deide_19790"/>
<dbReference type="eggNOG" id="COG0192">
    <property type="taxonomic scope" value="Bacteria"/>
</dbReference>
<dbReference type="HOGENOM" id="CLU_041802_1_1_0"/>
<dbReference type="OrthoDB" id="9801686at2"/>
<dbReference type="UniPathway" id="UPA00315">
    <property type="reaction ID" value="UER00080"/>
</dbReference>
<dbReference type="Proteomes" id="UP000002208">
    <property type="component" value="Chromosome"/>
</dbReference>
<dbReference type="GO" id="GO:0005737">
    <property type="term" value="C:cytoplasm"/>
    <property type="evidence" value="ECO:0007669"/>
    <property type="project" value="UniProtKB-SubCell"/>
</dbReference>
<dbReference type="GO" id="GO:0005524">
    <property type="term" value="F:ATP binding"/>
    <property type="evidence" value="ECO:0007669"/>
    <property type="project" value="UniProtKB-UniRule"/>
</dbReference>
<dbReference type="GO" id="GO:0000287">
    <property type="term" value="F:magnesium ion binding"/>
    <property type="evidence" value="ECO:0007669"/>
    <property type="project" value="UniProtKB-UniRule"/>
</dbReference>
<dbReference type="GO" id="GO:0004478">
    <property type="term" value="F:methionine adenosyltransferase activity"/>
    <property type="evidence" value="ECO:0007669"/>
    <property type="project" value="UniProtKB-UniRule"/>
</dbReference>
<dbReference type="GO" id="GO:0006730">
    <property type="term" value="P:one-carbon metabolic process"/>
    <property type="evidence" value="ECO:0007669"/>
    <property type="project" value="UniProtKB-KW"/>
</dbReference>
<dbReference type="GO" id="GO:0006556">
    <property type="term" value="P:S-adenosylmethionine biosynthetic process"/>
    <property type="evidence" value="ECO:0007669"/>
    <property type="project" value="UniProtKB-UniRule"/>
</dbReference>
<dbReference type="CDD" id="cd18079">
    <property type="entry name" value="S-AdoMet_synt"/>
    <property type="match status" value="1"/>
</dbReference>
<dbReference type="FunFam" id="3.30.300.10:FF:000003">
    <property type="entry name" value="S-adenosylmethionine synthase"/>
    <property type="match status" value="1"/>
</dbReference>
<dbReference type="FunFam" id="3.30.300.10:FF:000011">
    <property type="entry name" value="S-adenosylmethionine synthase"/>
    <property type="match status" value="1"/>
</dbReference>
<dbReference type="Gene3D" id="3.30.300.10">
    <property type="match status" value="3"/>
</dbReference>
<dbReference type="HAMAP" id="MF_00086">
    <property type="entry name" value="S_AdoMet_synth1"/>
    <property type="match status" value="1"/>
</dbReference>
<dbReference type="InterPro" id="IPR022631">
    <property type="entry name" value="ADOMET_SYNTHASE_CS"/>
</dbReference>
<dbReference type="InterPro" id="IPR022630">
    <property type="entry name" value="S-AdoMet_synt_C"/>
</dbReference>
<dbReference type="InterPro" id="IPR022629">
    <property type="entry name" value="S-AdoMet_synt_central"/>
</dbReference>
<dbReference type="InterPro" id="IPR022628">
    <property type="entry name" value="S-AdoMet_synt_N"/>
</dbReference>
<dbReference type="InterPro" id="IPR002133">
    <property type="entry name" value="S-AdoMet_synthetase"/>
</dbReference>
<dbReference type="InterPro" id="IPR022636">
    <property type="entry name" value="S-AdoMet_synthetase_sfam"/>
</dbReference>
<dbReference type="NCBIfam" id="TIGR01034">
    <property type="entry name" value="metK"/>
    <property type="match status" value="1"/>
</dbReference>
<dbReference type="PANTHER" id="PTHR11964">
    <property type="entry name" value="S-ADENOSYLMETHIONINE SYNTHETASE"/>
    <property type="match status" value="1"/>
</dbReference>
<dbReference type="Pfam" id="PF02773">
    <property type="entry name" value="S-AdoMet_synt_C"/>
    <property type="match status" value="1"/>
</dbReference>
<dbReference type="Pfam" id="PF02772">
    <property type="entry name" value="S-AdoMet_synt_M"/>
    <property type="match status" value="1"/>
</dbReference>
<dbReference type="Pfam" id="PF00438">
    <property type="entry name" value="S-AdoMet_synt_N"/>
    <property type="match status" value="1"/>
</dbReference>
<dbReference type="PIRSF" id="PIRSF000497">
    <property type="entry name" value="MAT"/>
    <property type="match status" value="1"/>
</dbReference>
<dbReference type="SUPFAM" id="SSF55973">
    <property type="entry name" value="S-adenosylmethionine synthetase"/>
    <property type="match status" value="3"/>
</dbReference>
<dbReference type="PROSITE" id="PS00376">
    <property type="entry name" value="ADOMET_SYNTHASE_1"/>
    <property type="match status" value="1"/>
</dbReference>
<dbReference type="PROSITE" id="PS00377">
    <property type="entry name" value="ADOMET_SYNTHASE_2"/>
    <property type="match status" value="1"/>
</dbReference>
<comment type="function">
    <text evidence="1">Catalyzes the formation of S-adenosylmethionine (AdoMet) from methionine and ATP. The overall synthetic reaction is composed of two sequential steps, AdoMet formation and the subsequent tripolyphosphate hydrolysis which occurs prior to release of AdoMet from the enzyme.</text>
</comment>
<comment type="catalytic activity">
    <reaction evidence="1">
        <text>L-methionine + ATP + H2O = S-adenosyl-L-methionine + phosphate + diphosphate</text>
        <dbReference type="Rhea" id="RHEA:21080"/>
        <dbReference type="ChEBI" id="CHEBI:15377"/>
        <dbReference type="ChEBI" id="CHEBI:30616"/>
        <dbReference type="ChEBI" id="CHEBI:33019"/>
        <dbReference type="ChEBI" id="CHEBI:43474"/>
        <dbReference type="ChEBI" id="CHEBI:57844"/>
        <dbReference type="ChEBI" id="CHEBI:59789"/>
        <dbReference type="EC" id="2.5.1.6"/>
    </reaction>
</comment>
<comment type="cofactor">
    <cofactor evidence="1">
        <name>Mg(2+)</name>
        <dbReference type="ChEBI" id="CHEBI:18420"/>
    </cofactor>
    <text evidence="1">Binds 2 divalent ions per subunit.</text>
</comment>
<comment type="cofactor">
    <cofactor evidence="1">
        <name>K(+)</name>
        <dbReference type="ChEBI" id="CHEBI:29103"/>
    </cofactor>
    <text evidence="1">Binds 1 potassium ion per subunit.</text>
</comment>
<comment type="pathway">
    <text evidence="1">Amino-acid biosynthesis; S-adenosyl-L-methionine biosynthesis; S-adenosyl-L-methionine from L-methionine: step 1/1.</text>
</comment>
<comment type="subunit">
    <text evidence="1">Homotetramer; dimer of dimers.</text>
</comment>
<comment type="subcellular location">
    <subcellularLocation>
        <location evidence="1">Cytoplasm</location>
    </subcellularLocation>
</comment>
<comment type="similarity">
    <text evidence="1">Belongs to the AdoMet synthase family.</text>
</comment>
<proteinExistence type="inferred from homology"/>
<gene>
    <name evidence="1" type="primary">metK</name>
    <name type="ordered locus">Deide_19790</name>
</gene>
<evidence type="ECO:0000255" key="1">
    <source>
        <dbReference type="HAMAP-Rule" id="MF_00086"/>
    </source>
</evidence>
<name>METK_DEIDV</name>
<feature type="chain" id="PRO_1000202613" description="S-adenosylmethionine synthase">
    <location>
        <begin position="1"/>
        <end position="403"/>
    </location>
</feature>
<feature type="region of interest" description="Flexible loop" evidence="1">
    <location>
        <begin position="99"/>
        <end position="109"/>
    </location>
</feature>
<feature type="binding site" description="in other chain" evidence="1">
    <location>
        <position position="14"/>
    </location>
    <ligand>
        <name>ATP</name>
        <dbReference type="ChEBI" id="CHEBI:30616"/>
        <note>ligand shared between two neighboring subunits</note>
    </ligand>
</feature>
<feature type="binding site" evidence="1">
    <location>
        <position position="16"/>
    </location>
    <ligand>
        <name>Mg(2+)</name>
        <dbReference type="ChEBI" id="CHEBI:18420"/>
    </ligand>
</feature>
<feature type="binding site" evidence="1">
    <location>
        <position position="42"/>
    </location>
    <ligand>
        <name>K(+)</name>
        <dbReference type="ChEBI" id="CHEBI:29103"/>
    </ligand>
</feature>
<feature type="binding site" description="in other chain" evidence="1">
    <location>
        <position position="55"/>
    </location>
    <ligand>
        <name>L-methionine</name>
        <dbReference type="ChEBI" id="CHEBI:57844"/>
        <note>ligand shared between two neighboring subunits</note>
    </ligand>
</feature>
<feature type="binding site" description="in other chain" evidence="1">
    <location>
        <position position="99"/>
    </location>
    <ligand>
        <name>L-methionine</name>
        <dbReference type="ChEBI" id="CHEBI:57844"/>
        <note>ligand shared between two neighboring subunits</note>
    </ligand>
</feature>
<feature type="binding site" description="in other chain" evidence="1">
    <location>
        <begin position="180"/>
        <end position="182"/>
    </location>
    <ligand>
        <name>ATP</name>
        <dbReference type="ChEBI" id="CHEBI:30616"/>
        <note>ligand shared between two neighboring subunits</note>
    </ligand>
</feature>
<feature type="binding site" description="in other chain" evidence="1">
    <location>
        <begin position="250"/>
        <end position="251"/>
    </location>
    <ligand>
        <name>ATP</name>
        <dbReference type="ChEBI" id="CHEBI:30616"/>
        <note>ligand shared between two neighboring subunits</note>
    </ligand>
</feature>
<feature type="binding site" evidence="1">
    <location>
        <position position="259"/>
    </location>
    <ligand>
        <name>ATP</name>
        <dbReference type="ChEBI" id="CHEBI:30616"/>
        <note>ligand shared between two neighboring subunits</note>
    </ligand>
</feature>
<feature type="binding site" evidence="1">
    <location>
        <position position="259"/>
    </location>
    <ligand>
        <name>L-methionine</name>
        <dbReference type="ChEBI" id="CHEBI:57844"/>
        <note>ligand shared between two neighboring subunits</note>
    </ligand>
</feature>
<feature type="binding site" description="in other chain" evidence="1">
    <location>
        <begin position="265"/>
        <end position="266"/>
    </location>
    <ligand>
        <name>ATP</name>
        <dbReference type="ChEBI" id="CHEBI:30616"/>
        <note>ligand shared between two neighboring subunits</note>
    </ligand>
</feature>
<feature type="binding site" evidence="1">
    <location>
        <position position="282"/>
    </location>
    <ligand>
        <name>ATP</name>
        <dbReference type="ChEBI" id="CHEBI:30616"/>
        <note>ligand shared between two neighboring subunits</note>
    </ligand>
</feature>
<feature type="binding site" evidence="1">
    <location>
        <position position="286"/>
    </location>
    <ligand>
        <name>ATP</name>
        <dbReference type="ChEBI" id="CHEBI:30616"/>
        <note>ligand shared between two neighboring subunits</note>
    </ligand>
</feature>
<feature type="binding site" description="in other chain" evidence="1">
    <location>
        <position position="290"/>
    </location>
    <ligand>
        <name>L-methionine</name>
        <dbReference type="ChEBI" id="CHEBI:57844"/>
        <note>ligand shared between two neighboring subunits</note>
    </ligand>
</feature>